<accession>P04080</accession>
<name>CYTB_HUMAN</name>
<evidence type="ECO:0000269" key="1">
    <source>
    </source>
</evidence>
<evidence type="ECO:0000269" key="2">
    <source>
    </source>
</evidence>
<evidence type="ECO:0000305" key="3"/>
<evidence type="ECO:0007744" key="4">
    <source>
    </source>
</evidence>
<evidence type="ECO:0007744" key="5">
    <source>
    </source>
</evidence>
<evidence type="ECO:0007829" key="6">
    <source>
        <dbReference type="PDB" id="1STF"/>
    </source>
</evidence>
<evidence type="ECO:0007829" key="7">
    <source>
        <dbReference type="PDB" id="2OCT"/>
    </source>
</evidence>
<organism>
    <name type="scientific">Homo sapiens</name>
    <name type="common">Human</name>
    <dbReference type="NCBI Taxonomy" id="9606"/>
    <lineage>
        <taxon>Eukaryota</taxon>
        <taxon>Metazoa</taxon>
        <taxon>Chordata</taxon>
        <taxon>Craniata</taxon>
        <taxon>Vertebrata</taxon>
        <taxon>Euteleostomi</taxon>
        <taxon>Mammalia</taxon>
        <taxon>Eutheria</taxon>
        <taxon>Euarchontoglires</taxon>
        <taxon>Primates</taxon>
        <taxon>Haplorrhini</taxon>
        <taxon>Catarrhini</taxon>
        <taxon>Hominidae</taxon>
        <taxon>Homo</taxon>
    </lineage>
</organism>
<dbReference type="EMBL" id="U46692">
    <property type="protein sequence ID" value="AAA99014.1"/>
    <property type="molecule type" value="Genomic_DNA"/>
</dbReference>
<dbReference type="EMBL" id="L03558">
    <property type="protein sequence ID" value="AAA35727.1"/>
    <property type="molecule type" value="mRNA"/>
</dbReference>
<dbReference type="EMBL" id="AF208234">
    <property type="protein sequence ID" value="AAF44059.1"/>
    <property type="molecule type" value="Genomic_DNA"/>
</dbReference>
<dbReference type="EMBL" id="AP001752">
    <property type="protein sequence ID" value="BAA95541.1"/>
    <property type="molecule type" value="Genomic_DNA"/>
</dbReference>
<dbReference type="EMBL" id="BC003370">
    <property type="protein sequence ID" value="AAH03370.1"/>
    <property type="molecule type" value="mRNA"/>
</dbReference>
<dbReference type="EMBL" id="BC010532">
    <property type="protein sequence ID" value="AAH10532.1"/>
    <property type="molecule type" value="mRNA"/>
</dbReference>
<dbReference type="CCDS" id="CCDS13701.1"/>
<dbReference type="PIR" id="A01278">
    <property type="entry name" value="UDHUB"/>
</dbReference>
<dbReference type="RefSeq" id="NP_000091.1">
    <property type="nucleotide sequence ID" value="NM_000100.4"/>
</dbReference>
<dbReference type="PDB" id="1STF">
    <property type="method" value="X-ray"/>
    <property type="resolution" value="2.37 A"/>
    <property type="chains" value="I=1-98"/>
</dbReference>
<dbReference type="PDB" id="2OCT">
    <property type="method" value="X-ray"/>
    <property type="resolution" value="1.40 A"/>
    <property type="chains" value="A/B=1-98"/>
</dbReference>
<dbReference type="PDB" id="4N6V">
    <property type="method" value="X-ray"/>
    <property type="resolution" value="1.80 A"/>
    <property type="chains" value="0/1/2/3/4/5/6/7/8/9=8-98"/>
</dbReference>
<dbReference type="PDBsum" id="1STF"/>
<dbReference type="PDBsum" id="2OCT"/>
<dbReference type="PDBsum" id="4N6V"/>
<dbReference type="BMRB" id="P04080"/>
<dbReference type="SMR" id="P04080"/>
<dbReference type="BioGRID" id="107858">
    <property type="interactions" value="96"/>
</dbReference>
<dbReference type="FunCoup" id="P04080">
    <property type="interactions" value="514"/>
</dbReference>
<dbReference type="IntAct" id="P04080">
    <property type="interactions" value="27"/>
</dbReference>
<dbReference type="MINT" id="P04080"/>
<dbReference type="STRING" id="9606.ENSP00000291568"/>
<dbReference type="DrugBank" id="DB09131">
    <property type="generic name" value="Cupric Chloride"/>
</dbReference>
<dbReference type="MEROPS" id="I25.003"/>
<dbReference type="TCDB" id="1.C.91.1.1">
    <property type="family name" value="the stefin b pore-forming protein (stefin b) family"/>
</dbReference>
<dbReference type="GlyCosmos" id="P04080">
    <property type="glycosylation" value="5 sites, 1 glycan"/>
</dbReference>
<dbReference type="GlyGen" id="P04080">
    <property type="glycosylation" value="5 sites, 1 O-linked glycan (5 sites)"/>
</dbReference>
<dbReference type="iPTMnet" id="P04080"/>
<dbReference type="PhosphoSitePlus" id="P04080"/>
<dbReference type="SwissPalm" id="P04080"/>
<dbReference type="BioMuta" id="CSTB"/>
<dbReference type="DMDM" id="1706278"/>
<dbReference type="CPTAC" id="CPTAC-184"/>
<dbReference type="CPTAC" id="CPTAC-185"/>
<dbReference type="jPOST" id="P04080"/>
<dbReference type="MassIVE" id="P04080"/>
<dbReference type="PaxDb" id="9606-ENSP00000291568"/>
<dbReference type="PeptideAtlas" id="P04080"/>
<dbReference type="PRIDE" id="P04080"/>
<dbReference type="ProteomicsDB" id="51648"/>
<dbReference type="TopDownProteomics" id="P04080"/>
<dbReference type="Antibodypedia" id="4378">
    <property type="antibodies" value="826 antibodies from 37 providers"/>
</dbReference>
<dbReference type="CPTC" id="P04080">
    <property type="antibodies" value="3 antibodies"/>
</dbReference>
<dbReference type="DNASU" id="1476"/>
<dbReference type="Ensembl" id="ENST00000291568.7">
    <property type="protein sequence ID" value="ENSP00000291568.6"/>
    <property type="gene ID" value="ENSG00000160213.10"/>
</dbReference>
<dbReference type="GeneID" id="1476"/>
<dbReference type="KEGG" id="hsa:1476"/>
<dbReference type="MANE-Select" id="ENST00000291568.7">
    <property type="protein sequence ID" value="ENSP00000291568.6"/>
    <property type="RefSeq nucleotide sequence ID" value="NM_000100.4"/>
    <property type="RefSeq protein sequence ID" value="NP_000091.1"/>
</dbReference>
<dbReference type="AGR" id="HGNC:2482"/>
<dbReference type="CTD" id="1476"/>
<dbReference type="DisGeNET" id="1476"/>
<dbReference type="GeneCards" id="CSTB"/>
<dbReference type="GeneReviews" id="CSTB"/>
<dbReference type="HGNC" id="HGNC:2482">
    <property type="gene designation" value="CSTB"/>
</dbReference>
<dbReference type="HPA" id="ENSG00000160213">
    <property type="expression patterns" value="Tissue enriched (esophagus)"/>
</dbReference>
<dbReference type="MalaCards" id="CSTB"/>
<dbReference type="MIM" id="254800">
    <property type="type" value="phenotype"/>
</dbReference>
<dbReference type="MIM" id="601145">
    <property type="type" value="gene"/>
</dbReference>
<dbReference type="neXtProt" id="NX_P04080"/>
<dbReference type="OpenTargets" id="ENSG00000160213"/>
<dbReference type="Orphanet" id="248">
    <property type="disease" value="Autosomal recessive hypohidrotic ectodermal dysplasia"/>
</dbReference>
<dbReference type="Orphanet" id="308">
    <property type="disease" value="Progressive myoclonic epilepsy type 1"/>
</dbReference>
<dbReference type="PharmGKB" id="PA26984"/>
<dbReference type="VEuPathDB" id="HostDB:ENSG00000160213"/>
<dbReference type="eggNOG" id="ENOG502SF2X">
    <property type="taxonomic scope" value="Eukaryota"/>
</dbReference>
<dbReference type="GeneTree" id="ENSGT00940000154826"/>
<dbReference type="HOGENOM" id="CLU_150234_2_0_1"/>
<dbReference type="InParanoid" id="P04080"/>
<dbReference type="OMA" id="LPHENQP"/>
<dbReference type="OrthoDB" id="2429551at2759"/>
<dbReference type="PAN-GO" id="P04080">
    <property type="GO annotations" value="2 GO annotations based on evolutionary models"/>
</dbReference>
<dbReference type="PhylomeDB" id="P04080"/>
<dbReference type="TreeFam" id="TF333174"/>
<dbReference type="PathwayCommons" id="P04080"/>
<dbReference type="Reactome" id="R-HSA-6798695">
    <property type="pathway name" value="Neutrophil degranulation"/>
</dbReference>
<dbReference type="SignaLink" id="P04080"/>
<dbReference type="BioGRID-ORCS" id="1476">
    <property type="hits" value="25 hits in 1167 CRISPR screens"/>
</dbReference>
<dbReference type="CD-CODE" id="DEE660B4">
    <property type="entry name" value="Stress granule"/>
</dbReference>
<dbReference type="ChiTaRS" id="CSTB">
    <property type="organism name" value="human"/>
</dbReference>
<dbReference type="EvolutionaryTrace" id="P04080"/>
<dbReference type="GeneWiki" id="Cystatin_B"/>
<dbReference type="GenomeRNAi" id="1476"/>
<dbReference type="Pharos" id="P04080">
    <property type="development level" value="Tbio"/>
</dbReference>
<dbReference type="PRO" id="PR:P04080"/>
<dbReference type="Proteomes" id="UP000005640">
    <property type="component" value="Chromosome 21"/>
</dbReference>
<dbReference type="RNAct" id="P04080">
    <property type="molecule type" value="protein"/>
</dbReference>
<dbReference type="Bgee" id="ENSG00000160213">
    <property type="expression patterns" value="Expressed in lower esophagus mucosa and 202 other cell types or tissues"/>
</dbReference>
<dbReference type="ExpressionAtlas" id="P04080">
    <property type="expression patterns" value="baseline and differential"/>
</dbReference>
<dbReference type="GO" id="GO:0062023">
    <property type="term" value="C:collagen-containing extracellular matrix"/>
    <property type="evidence" value="ECO:0007005"/>
    <property type="project" value="BHF-UCL"/>
</dbReference>
<dbReference type="GO" id="GO:0005737">
    <property type="term" value="C:cytoplasm"/>
    <property type="evidence" value="ECO:0000314"/>
    <property type="project" value="UniProtKB"/>
</dbReference>
<dbReference type="GO" id="GO:0005829">
    <property type="term" value="C:cytosol"/>
    <property type="evidence" value="ECO:0000314"/>
    <property type="project" value="HPA"/>
</dbReference>
<dbReference type="GO" id="GO:0070062">
    <property type="term" value="C:extracellular exosome"/>
    <property type="evidence" value="ECO:0007005"/>
    <property type="project" value="UniProtKB"/>
</dbReference>
<dbReference type="GO" id="GO:0005576">
    <property type="term" value="C:extracellular region"/>
    <property type="evidence" value="ECO:0000304"/>
    <property type="project" value="Reactome"/>
</dbReference>
<dbReference type="GO" id="GO:0005615">
    <property type="term" value="C:extracellular space"/>
    <property type="evidence" value="ECO:0000314"/>
    <property type="project" value="UniProtKB"/>
</dbReference>
<dbReference type="GO" id="GO:1904813">
    <property type="term" value="C:ficolin-1-rich granule lumen"/>
    <property type="evidence" value="ECO:0000304"/>
    <property type="project" value="Reactome"/>
</dbReference>
<dbReference type="GO" id="GO:0005730">
    <property type="term" value="C:nucleolus"/>
    <property type="evidence" value="ECO:0000314"/>
    <property type="project" value="HPA"/>
</dbReference>
<dbReference type="GO" id="GO:0005634">
    <property type="term" value="C:nucleus"/>
    <property type="evidence" value="ECO:0000314"/>
    <property type="project" value="MGI"/>
</dbReference>
<dbReference type="GO" id="GO:0034774">
    <property type="term" value="C:secretory granule lumen"/>
    <property type="evidence" value="ECO:0000304"/>
    <property type="project" value="Reactome"/>
</dbReference>
<dbReference type="GO" id="GO:1904724">
    <property type="term" value="C:tertiary granule lumen"/>
    <property type="evidence" value="ECO:0000304"/>
    <property type="project" value="Reactome"/>
</dbReference>
<dbReference type="GO" id="GO:0004869">
    <property type="term" value="F:cysteine-type endopeptidase inhibitor activity"/>
    <property type="evidence" value="ECO:0000314"/>
    <property type="project" value="UniProtKB"/>
</dbReference>
<dbReference type="GO" id="GO:0004866">
    <property type="term" value="F:endopeptidase inhibitor activity"/>
    <property type="evidence" value="ECO:0000314"/>
    <property type="project" value="MGI"/>
</dbReference>
<dbReference type="GO" id="GO:0002020">
    <property type="term" value="F:protease binding"/>
    <property type="evidence" value="ECO:0000314"/>
    <property type="project" value="MGI"/>
</dbReference>
<dbReference type="GO" id="GO:0003723">
    <property type="term" value="F:RNA binding"/>
    <property type="evidence" value="ECO:0007005"/>
    <property type="project" value="UniProtKB"/>
</dbReference>
<dbReference type="GO" id="GO:0008344">
    <property type="term" value="P:adult locomotory behavior"/>
    <property type="evidence" value="ECO:0007669"/>
    <property type="project" value="Ensembl"/>
</dbReference>
<dbReference type="GO" id="GO:0045861">
    <property type="term" value="P:negative regulation of proteolysis"/>
    <property type="evidence" value="ECO:0000314"/>
    <property type="project" value="UniProtKB"/>
</dbReference>
<dbReference type="CDD" id="cd00042">
    <property type="entry name" value="CY"/>
    <property type="match status" value="1"/>
</dbReference>
<dbReference type="FunFam" id="3.10.450.10:FF:000001">
    <property type="entry name" value="Cystatin-A"/>
    <property type="match status" value="1"/>
</dbReference>
<dbReference type="Gene3D" id="3.10.450.10">
    <property type="match status" value="1"/>
</dbReference>
<dbReference type="InterPro" id="IPR000010">
    <property type="entry name" value="Cystatin_dom"/>
</dbReference>
<dbReference type="InterPro" id="IPR046350">
    <property type="entry name" value="Cystatin_sf"/>
</dbReference>
<dbReference type="InterPro" id="IPR018073">
    <property type="entry name" value="Prot_inh_cystat_CS"/>
</dbReference>
<dbReference type="InterPro" id="IPR001713">
    <property type="entry name" value="Prot_inh_stefin"/>
</dbReference>
<dbReference type="PANTHER" id="PTHR11414">
    <property type="entry name" value="CYSTATIN FAMILY MEMBER"/>
    <property type="match status" value="1"/>
</dbReference>
<dbReference type="PANTHER" id="PTHR11414:SF22">
    <property type="entry name" value="CYSTATIN-B"/>
    <property type="match status" value="1"/>
</dbReference>
<dbReference type="Pfam" id="PF00031">
    <property type="entry name" value="Cystatin"/>
    <property type="match status" value="1"/>
</dbReference>
<dbReference type="PRINTS" id="PR00295">
    <property type="entry name" value="STEFINA"/>
</dbReference>
<dbReference type="SMART" id="SM00043">
    <property type="entry name" value="CY"/>
    <property type="match status" value="1"/>
</dbReference>
<dbReference type="SUPFAM" id="SSF54403">
    <property type="entry name" value="Cystatin/monellin"/>
    <property type="match status" value="1"/>
</dbReference>
<dbReference type="PROSITE" id="PS00287">
    <property type="entry name" value="CYSTATIN"/>
    <property type="match status" value="1"/>
</dbReference>
<gene>
    <name type="primary">CSTB</name>
    <name type="synonym">CST6</name>
    <name type="synonym">STFB</name>
</gene>
<reference key="1">
    <citation type="journal article" date="1985" name="Biochem. Biophys. Res. Commun.">
        <title>Amino acid sequence of the intracellular cysteine proteinase inhibitor cystatin B from human liver.</title>
        <authorList>
            <person name="Ritonja A."/>
            <person name="Machleidt W."/>
            <person name="Barrett A.J."/>
        </authorList>
    </citation>
    <scope>PROTEIN SEQUENCE</scope>
</reference>
<reference key="2">
    <citation type="journal article" date="1996" name="Science">
        <title>Mutations in the gene encoding cystatin B in progressive myoclonus epilepsy (EPM1).</title>
        <authorList>
            <person name="Pennacchio L.A."/>
            <person name="Lehesjoki A.-E."/>
            <person name="Stone N.E."/>
            <person name="Willour V.L."/>
            <person name="Virteneva K."/>
            <person name="Miao J."/>
            <person name="D'Amato E."/>
            <person name="Ramirez L."/>
            <person name="Faham J."/>
            <person name="Koskiniemi M."/>
            <person name="Warringtion J.A."/>
            <person name="Norio R."/>
            <person name="la Chapelle A."/>
            <person name="Cox D.R."/>
            <person name="Myers R.M."/>
        </authorList>
    </citation>
    <scope>NUCLEOTIDE SEQUENCE [GENOMIC DNA / MRNA]</scope>
</reference>
<reference key="3">
    <citation type="submission" date="1993-05" db="EMBL/GenBank/DDBJ databases">
        <authorList>
            <person name="Bhat K.S."/>
        </authorList>
    </citation>
    <scope>NUCLEOTIDE SEQUENCE [MRNA]</scope>
</reference>
<reference key="4">
    <citation type="journal article" date="2000" name="Nature">
        <title>The DNA sequence of human chromosome 21.</title>
        <authorList>
            <person name="Hattori M."/>
            <person name="Fujiyama A."/>
            <person name="Taylor T.D."/>
            <person name="Watanabe H."/>
            <person name="Yada T."/>
            <person name="Park H.-S."/>
            <person name="Toyoda A."/>
            <person name="Ishii K."/>
            <person name="Totoki Y."/>
            <person name="Choi D.-K."/>
            <person name="Groner Y."/>
            <person name="Soeda E."/>
            <person name="Ohki M."/>
            <person name="Takagi T."/>
            <person name="Sakaki Y."/>
            <person name="Taudien S."/>
            <person name="Blechschmidt K."/>
            <person name="Polley A."/>
            <person name="Menzel U."/>
            <person name="Delabar J."/>
            <person name="Kumpf K."/>
            <person name="Lehmann R."/>
            <person name="Patterson D."/>
            <person name="Reichwald K."/>
            <person name="Rump A."/>
            <person name="Schillhabel M."/>
            <person name="Schudy A."/>
            <person name="Zimmermann W."/>
            <person name="Rosenthal A."/>
            <person name="Kudoh J."/>
            <person name="Shibuya K."/>
            <person name="Kawasaki K."/>
            <person name="Asakawa S."/>
            <person name="Shintani A."/>
            <person name="Sasaki T."/>
            <person name="Nagamine K."/>
            <person name="Mitsuyama S."/>
            <person name="Antonarakis S.E."/>
            <person name="Minoshima S."/>
            <person name="Shimizu N."/>
            <person name="Nordsiek G."/>
            <person name="Hornischer K."/>
            <person name="Brandt P."/>
            <person name="Scharfe M."/>
            <person name="Schoen O."/>
            <person name="Desario A."/>
            <person name="Reichelt J."/>
            <person name="Kauer G."/>
            <person name="Bloecker H."/>
            <person name="Ramser J."/>
            <person name="Beck A."/>
            <person name="Klages S."/>
            <person name="Hennig S."/>
            <person name="Riesselmann L."/>
            <person name="Dagand E."/>
            <person name="Wehrmeyer S."/>
            <person name="Borzym K."/>
            <person name="Gardiner K."/>
            <person name="Nizetic D."/>
            <person name="Francis F."/>
            <person name="Lehrach H."/>
            <person name="Reinhardt R."/>
            <person name="Yaspo M.-L."/>
        </authorList>
    </citation>
    <scope>NUCLEOTIDE SEQUENCE [LARGE SCALE GENOMIC DNA]</scope>
</reference>
<reference key="5">
    <citation type="journal article" date="2004" name="Genome Res.">
        <title>The status, quality, and expansion of the NIH full-length cDNA project: the Mammalian Gene Collection (MGC).</title>
        <authorList>
            <consortium name="The MGC Project Team"/>
        </authorList>
    </citation>
    <scope>NUCLEOTIDE SEQUENCE [LARGE SCALE MRNA]</scope>
    <source>
        <tissue>Placenta</tissue>
    </source>
</reference>
<reference key="6">
    <citation type="journal article" date="2001" name="Exp. Cell Res.">
        <title>Nuclear localization of cystatin B, the cathepsin inhibitor implicated in myoclonus epilepsy (EPM1).</title>
        <authorList>
            <person name="Riccio M."/>
            <person name="Di Giaimo R."/>
            <person name="Pianetti S."/>
            <person name="Palmieri P.P."/>
            <person name="Melli M."/>
            <person name="Santi S."/>
        </authorList>
    </citation>
    <scope>SUBCELLULAR LOCATION</scope>
</reference>
<reference key="7">
    <citation type="journal article" date="2009" name="Anal. Chem.">
        <title>Lys-N and trypsin cover complementary parts of the phosphoproteome in a refined SCX-based approach.</title>
        <authorList>
            <person name="Gauci S."/>
            <person name="Helbig A.O."/>
            <person name="Slijper M."/>
            <person name="Krijgsveld J."/>
            <person name="Heck A.J."/>
            <person name="Mohammed S."/>
        </authorList>
    </citation>
    <scope>ACETYLATION [LARGE SCALE ANALYSIS] AT MET-1</scope>
    <scope>IDENTIFICATION BY MASS SPECTROMETRY [LARGE SCALE ANALYSIS]</scope>
</reference>
<reference key="8">
    <citation type="journal article" date="2011" name="BMC Syst. Biol.">
        <title>Initial characterization of the human central proteome.</title>
        <authorList>
            <person name="Burkard T.R."/>
            <person name="Planyavsky M."/>
            <person name="Kaupe I."/>
            <person name="Breitwieser F.P."/>
            <person name="Buerckstuemmer T."/>
            <person name="Bennett K.L."/>
            <person name="Superti-Furga G."/>
            <person name="Colinge J."/>
        </authorList>
    </citation>
    <scope>IDENTIFICATION BY MASS SPECTROMETRY [LARGE SCALE ANALYSIS]</scope>
</reference>
<reference key="9">
    <citation type="journal article" date="2012" name="Mol. Cell. Proteomics">
        <title>Comparative large-scale characterisation of plant vs. mammal proteins reveals similar and idiosyncratic N-alpha acetylation features.</title>
        <authorList>
            <person name="Bienvenut W.V."/>
            <person name="Sumpton D."/>
            <person name="Martinez A."/>
            <person name="Lilla S."/>
            <person name="Espagne C."/>
            <person name="Meinnel T."/>
            <person name="Giglione C."/>
        </authorList>
    </citation>
    <scope>ACETYLATION [LARGE SCALE ANALYSIS] AT MET-1</scope>
    <scope>IDENTIFICATION BY MASS SPECTROMETRY [LARGE SCALE ANALYSIS]</scope>
</reference>
<reference key="10">
    <citation type="journal article" date="2014" name="J. Proteomics">
        <title>An enzyme assisted RP-RPLC approach for in-depth analysis of human liver phosphoproteome.</title>
        <authorList>
            <person name="Bian Y."/>
            <person name="Song C."/>
            <person name="Cheng K."/>
            <person name="Dong M."/>
            <person name="Wang F."/>
            <person name="Huang J."/>
            <person name="Sun D."/>
            <person name="Wang L."/>
            <person name="Ye M."/>
            <person name="Zou H."/>
        </authorList>
    </citation>
    <scope>IDENTIFICATION BY MASS SPECTROMETRY [LARGE SCALE ANALYSIS]</scope>
    <source>
        <tissue>Liver</tissue>
    </source>
</reference>
<reference key="11">
    <citation type="journal article" date="2015" name="Proteomics">
        <title>N-terminome analysis of the human mitochondrial proteome.</title>
        <authorList>
            <person name="Vaca Jacome A.S."/>
            <person name="Rabilloud T."/>
            <person name="Schaeffer-Reiss C."/>
            <person name="Rompais M."/>
            <person name="Ayoub D."/>
            <person name="Lane L."/>
            <person name="Bairoch A."/>
            <person name="Van Dorsselaer A."/>
            <person name="Carapito C."/>
        </authorList>
    </citation>
    <scope>IDENTIFICATION BY MASS SPECTROMETRY [LARGE SCALE ANALYSIS]</scope>
</reference>
<reference key="12">
    <citation type="journal article" date="1990" name="EMBO J.">
        <title>The refined 2.4 A X-ray crystal structure of recombinant human stefin B in complex with the cysteine proteinase papain: a novel type of proteinase inhibitor interaction.</title>
        <authorList>
            <person name="Stubbs M.T."/>
            <person name="Laber B."/>
            <person name="Bode W."/>
            <person name="Huber R."/>
            <person name="Jerala R."/>
            <person name="Lenarcic B."/>
            <person name="Turk V."/>
        </authorList>
    </citation>
    <scope>X-RAY CRYSTALLOGRAPHY (2.4 ANGSTROMS)</scope>
</reference>
<reference key="13">
    <citation type="journal article" date="1997" name="Am. J. Hum. Genet.">
        <title>Identification of mutations in cystatin B, the gene responsible for the Unverricht-Lundborg type of progressive myoclonus epilepsy (EPM1).</title>
        <authorList>
            <person name="Lalioti M.D."/>
            <person name="Mirotsou M."/>
            <person name="Buresi C."/>
            <person name="Peitsch M.C."/>
            <person name="Rossier C."/>
            <person name="Ouazzani R."/>
            <person name="Baldy-Moulinier M."/>
            <person name="Bottani A."/>
            <person name="Malafosse A."/>
            <person name="Antonarakis S.E."/>
        </authorList>
    </citation>
    <scope>VARIANT EPM1 ARG-4</scope>
</reference>
<proteinExistence type="evidence at protein level"/>
<comment type="function">
    <text>This is an intracellular thiol proteinase inhibitor. Tightly binding reversible inhibitor of cathepsins L, H and B.</text>
</comment>
<comment type="subunit">
    <text>Able to form dimers stabilized by noncovalent forces.</text>
</comment>
<comment type="subcellular location">
    <subcellularLocation>
        <location evidence="1">Cytoplasm</location>
    </subcellularLocation>
    <subcellularLocation>
        <location evidence="1">Nucleus</location>
    </subcellularLocation>
</comment>
<comment type="disease" evidence="2">
    <disease id="DI-00952">
        <name>Epilepsy, progressive myoclonic 1</name>
        <acronym>EPM1</acronym>
        <description>A form of progressive myoclonic epilepsy, a clinically and genetically heterogeneous group of disorders defined by the combination of action and reflex myoclonus, other types of epileptic seizures, and progressive neurodegeneration and neurocognitive impairment. EPM1 is an autosomal recessive form characterized by severe, stimulus-sensitive myoclonus and tonic-clonic seizures. The onset, occurring between 6 and 13 years of age, is characterized by convulsions. Myoclonus begins 1 to 5 years later. The twitchings occur predominantly in the proximal muscles of the extremities and are bilaterally symmetrical, although asynchronous. At first small, they become late in the clinical course so violent that the victim is thrown to the floor. Mental deterioration and eventually dementia develop.</description>
        <dbReference type="MIM" id="254800"/>
    </disease>
    <text>The disease is caused by variants affecting the gene represented in this entry.</text>
</comment>
<comment type="similarity">
    <text evidence="3">Belongs to the cystatin family.</text>
</comment>
<comment type="online information" name="Atlas of Genetics and Cytogenetics in Oncology and Haematology">
    <link uri="https://atlasgeneticsoncology.org/gene/40181/CSTB"/>
</comment>
<keyword id="KW-0002">3D-structure</keyword>
<keyword id="KW-0007">Acetylation</keyword>
<keyword id="KW-0963">Cytoplasm</keyword>
<keyword id="KW-0903">Direct protein sequencing</keyword>
<keyword id="KW-0225">Disease variant</keyword>
<keyword id="KW-0887">Epilepsy</keyword>
<keyword id="KW-0523">Neurodegeneration</keyword>
<keyword id="KW-0539">Nucleus</keyword>
<keyword id="KW-0646">Protease inhibitor</keyword>
<keyword id="KW-1267">Proteomics identification</keyword>
<keyword id="KW-1185">Reference proteome</keyword>
<keyword id="KW-0789">Thiol protease inhibitor</keyword>
<feature type="chain" id="PRO_0000207136" description="Cystatin-B">
    <location>
        <begin position="1"/>
        <end position="98"/>
    </location>
</feature>
<feature type="short sequence motif" description="Secondary area of contact">
    <location>
        <begin position="46"/>
        <end position="50"/>
    </location>
</feature>
<feature type="site" description="Reactive site">
    <location>
        <position position="4"/>
    </location>
</feature>
<feature type="modified residue" description="N-acetylmethionine" evidence="4 5">
    <location>
        <position position="1"/>
    </location>
</feature>
<feature type="sequence variant" id="VAR_002206" description="In EPM1; dbSNP:rs74315443." evidence="2">
    <original>G</original>
    <variation>R</variation>
    <location>
        <position position="4"/>
    </location>
</feature>
<feature type="sequence conflict" description="In Ref. 1; AA sequence." evidence="3" ref="1">
    <original>E</original>
    <variation>Y</variation>
    <location>
        <position position="31"/>
    </location>
</feature>
<feature type="helix" evidence="7">
    <location>
        <begin position="14"/>
        <end position="31"/>
    </location>
</feature>
<feature type="strand" evidence="7">
    <location>
        <begin position="39"/>
        <end position="58"/>
    </location>
</feature>
<feature type="strand" evidence="6">
    <location>
        <begin position="60"/>
        <end position="62"/>
    </location>
</feature>
<feature type="strand" evidence="7">
    <location>
        <begin position="64"/>
        <end position="74"/>
    </location>
</feature>
<feature type="strand" evidence="7">
    <location>
        <begin position="80"/>
        <end position="89"/>
    </location>
</feature>
<protein>
    <recommendedName>
        <fullName>Cystatin-B</fullName>
    </recommendedName>
    <alternativeName>
        <fullName>CPI-B</fullName>
    </alternativeName>
    <alternativeName>
        <fullName>Liver thiol proteinase inhibitor</fullName>
    </alternativeName>
    <alternativeName>
        <fullName>Stefin-B</fullName>
    </alternativeName>
</protein>
<sequence length="98" mass="11140">MMCGAPSATQPATAETQHIADQVRSQLEEKENKKFPVFKAVSFKSQVVAGTNYFIKVHVGDEDFVHLRVFQSLPHENKPLTLSNYQTNKAKHDELTYF</sequence>